<dbReference type="EC" id="5.1.1.3" evidence="1"/>
<dbReference type="EMBL" id="CP001048">
    <property type="protein sequence ID" value="ACC87132.1"/>
    <property type="molecule type" value="Genomic_DNA"/>
</dbReference>
<dbReference type="RefSeq" id="WP_012413410.1">
    <property type="nucleotide sequence ID" value="NZ_CP009780.1"/>
</dbReference>
<dbReference type="SMR" id="B2JZF9"/>
<dbReference type="KEGG" id="ypb:YPTS_0133"/>
<dbReference type="PATRIC" id="fig|502801.10.peg.3810"/>
<dbReference type="UniPathway" id="UPA00219"/>
<dbReference type="GO" id="GO:0008881">
    <property type="term" value="F:glutamate racemase activity"/>
    <property type="evidence" value="ECO:0007669"/>
    <property type="project" value="UniProtKB-UniRule"/>
</dbReference>
<dbReference type="GO" id="GO:0071555">
    <property type="term" value="P:cell wall organization"/>
    <property type="evidence" value="ECO:0007669"/>
    <property type="project" value="UniProtKB-KW"/>
</dbReference>
<dbReference type="GO" id="GO:0009252">
    <property type="term" value="P:peptidoglycan biosynthetic process"/>
    <property type="evidence" value="ECO:0007669"/>
    <property type="project" value="UniProtKB-UniRule"/>
</dbReference>
<dbReference type="GO" id="GO:0008360">
    <property type="term" value="P:regulation of cell shape"/>
    <property type="evidence" value="ECO:0007669"/>
    <property type="project" value="UniProtKB-KW"/>
</dbReference>
<dbReference type="FunFam" id="3.40.50.1860:FF:000002">
    <property type="entry name" value="Glutamate racemase"/>
    <property type="match status" value="1"/>
</dbReference>
<dbReference type="Gene3D" id="3.40.50.1860">
    <property type="match status" value="2"/>
</dbReference>
<dbReference type="HAMAP" id="MF_00258">
    <property type="entry name" value="Glu_racemase"/>
    <property type="match status" value="1"/>
</dbReference>
<dbReference type="InterPro" id="IPR015942">
    <property type="entry name" value="Asp/Glu/hydantoin_racemase"/>
</dbReference>
<dbReference type="InterPro" id="IPR001920">
    <property type="entry name" value="Asp/Glu_race"/>
</dbReference>
<dbReference type="InterPro" id="IPR018187">
    <property type="entry name" value="Asp/Glu_racemase_AS_1"/>
</dbReference>
<dbReference type="InterPro" id="IPR033134">
    <property type="entry name" value="Asp/Glu_racemase_AS_2"/>
</dbReference>
<dbReference type="InterPro" id="IPR004391">
    <property type="entry name" value="Glu_race"/>
</dbReference>
<dbReference type="NCBIfam" id="TIGR00067">
    <property type="entry name" value="glut_race"/>
    <property type="match status" value="1"/>
</dbReference>
<dbReference type="NCBIfam" id="NF002034">
    <property type="entry name" value="PRK00865.1-1"/>
    <property type="match status" value="1"/>
</dbReference>
<dbReference type="PANTHER" id="PTHR21198">
    <property type="entry name" value="GLUTAMATE RACEMASE"/>
    <property type="match status" value="1"/>
</dbReference>
<dbReference type="PANTHER" id="PTHR21198:SF2">
    <property type="entry name" value="GLUTAMATE RACEMASE"/>
    <property type="match status" value="1"/>
</dbReference>
<dbReference type="Pfam" id="PF01177">
    <property type="entry name" value="Asp_Glu_race"/>
    <property type="match status" value="1"/>
</dbReference>
<dbReference type="SUPFAM" id="SSF53681">
    <property type="entry name" value="Aspartate/glutamate racemase"/>
    <property type="match status" value="2"/>
</dbReference>
<dbReference type="PROSITE" id="PS00923">
    <property type="entry name" value="ASP_GLU_RACEMASE_1"/>
    <property type="match status" value="1"/>
</dbReference>
<dbReference type="PROSITE" id="PS00924">
    <property type="entry name" value="ASP_GLU_RACEMASE_2"/>
    <property type="match status" value="1"/>
</dbReference>
<protein>
    <recommendedName>
        <fullName evidence="1">Glutamate racemase</fullName>
        <ecNumber evidence="1">5.1.1.3</ecNumber>
    </recommendedName>
</protein>
<evidence type="ECO:0000255" key="1">
    <source>
        <dbReference type="HAMAP-Rule" id="MF_00258"/>
    </source>
</evidence>
<evidence type="ECO:0000256" key="2">
    <source>
        <dbReference type="SAM" id="MobiDB-lite"/>
    </source>
</evidence>
<name>MURI_YERPB</name>
<proteinExistence type="inferred from homology"/>
<organism>
    <name type="scientific">Yersinia pseudotuberculosis serotype IB (strain PB1/+)</name>
    <dbReference type="NCBI Taxonomy" id="502801"/>
    <lineage>
        <taxon>Bacteria</taxon>
        <taxon>Pseudomonadati</taxon>
        <taxon>Pseudomonadota</taxon>
        <taxon>Gammaproteobacteria</taxon>
        <taxon>Enterobacterales</taxon>
        <taxon>Yersiniaceae</taxon>
        <taxon>Yersinia</taxon>
    </lineage>
</organism>
<reference key="1">
    <citation type="submission" date="2008-04" db="EMBL/GenBank/DDBJ databases">
        <title>Complete sequence of Yersinia pseudotuberculosis PB1/+.</title>
        <authorList>
            <person name="Copeland A."/>
            <person name="Lucas S."/>
            <person name="Lapidus A."/>
            <person name="Glavina del Rio T."/>
            <person name="Dalin E."/>
            <person name="Tice H."/>
            <person name="Bruce D."/>
            <person name="Goodwin L."/>
            <person name="Pitluck S."/>
            <person name="Munk A.C."/>
            <person name="Brettin T."/>
            <person name="Detter J.C."/>
            <person name="Han C."/>
            <person name="Tapia R."/>
            <person name="Schmutz J."/>
            <person name="Larimer F."/>
            <person name="Land M."/>
            <person name="Hauser L."/>
            <person name="Challacombe J.F."/>
            <person name="Green L."/>
            <person name="Lindler L.E."/>
            <person name="Nikolich M.P."/>
            <person name="Richardson P."/>
        </authorList>
    </citation>
    <scope>NUCLEOTIDE SEQUENCE [LARGE SCALE GENOMIC DNA]</scope>
    <source>
        <strain>PB1/+</strain>
    </source>
</reference>
<accession>B2JZF9</accession>
<sequence>MATKPQDANTTSREAITSKADSPPRPTALIFDSGVGGLSVYQEIRQLLPNLHYIYAFDNVAFPYGEKSGEFIVERVLEIVTAVQQSHPLAIVVIACNTASTVSLPALRERFAFPVVGVVPAIKPAVRLTRNGVVGLLATRATVHASYTLDLIARFATDCKIELLGSSELVEAAETKLHGGVVPLEVLKKILHPWLSMREPPDTIVLGCTHFPLLTEELAQVLPEGTRMVDSGAAIARRTAWLISSQENVISSQDENIAYCMALDEDTDALLPVLQSYGFPKLQKLPI</sequence>
<keyword id="KW-0133">Cell shape</keyword>
<keyword id="KW-0961">Cell wall biogenesis/degradation</keyword>
<keyword id="KW-0413">Isomerase</keyword>
<keyword id="KW-0573">Peptidoglycan synthesis</keyword>
<gene>
    <name evidence="1" type="primary">murI</name>
    <name type="ordered locus">YPTS_0133</name>
</gene>
<feature type="chain" id="PRO_1000114075" description="Glutamate racemase">
    <location>
        <begin position="1"/>
        <end position="287"/>
    </location>
</feature>
<feature type="region of interest" description="Disordered" evidence="2">
    <location>
        <begin position="1"/>
        <end position="25"/>
    </location>
</feature>
<feature type="compositionally biased region" description="Polar residues" evidence="2">
    <location>
        <begin position="1"/>
        <end position="15"/>
    </location>
</feature>
<feature type="active site" description="Proton donor/acceptor" evidence="1">
    <location>
        <position position="96"/>
    </location>
</feature>
<feature type="active site" description="Proton donor/acceptor" evidence="1">
    <location>
        <position position="208"/>
    </location>
</feature>
<feature type="binding site" evidence="1">
    <location>
        <begin position="32"/>
        <end position="33"/>
    </location>
    <ligand>
        <name>substrate</name>
    </ligand>
</feature>
<feature type="binding site" evidence="1">
    <location>
        <begin position="64"/>
        <end position="65"/>
    </location>
    <ligand>
        <name>substrate</name>
    </ligand>
</feature>
<feature type="binding site" evidence="1">
    <location>
        <begin position="97"/>
        <end position="98"/>
    </location>
    <ligand>
        <name>substrate</name>
    </ligand>
</feature>
<feature type="binding site" evidence="1">
    <location>
        <begin position="209"/>
        <end position="210"/>
    </location>
    <ligand>
        <name>substrate</name>
    </ligand>
</feature>
<comment type="function">
    <text evidence="1">Provides the (R)-glutamate required for cell wall biosynthesis.</text>
</comment>
<comment type="catalytic activity">
    <reaction evidence="1">
        <text>L-glutamate = D-glutamate</text>
        <dbReference type="Rhea" id="RHEA:12813"/>
        <dbReference type="ChEBI" id="CHEBI:29985"/>
        <dbReference type="ChEBI" id="CHEBI:29986"/>
        <dbReference type="EC" id="5.1.1.3"/>
    </reaction>
</comment>
<comment type="pathway">
    <text evidence="1">Cell wall biogenesis; peptidoglycan biosynthesis.</text>
</comment>
<comment type="similarity">
    <text evidence="1">Belongs to the aspartate/glutamate racemases family.</text>
</comment>